<proteinExistence type="inferred from homology"/>
<evidence type="ECO:0000255" key="1"/>
<evidence type="ECO:0000256" key="2">
    <source>
        <dbReference type="SAM" id="MobiDB-lite"/>
    </source>
</evidence>
<evidence type="ECO:0000305" key="3"/>
<keyword id="KW-0472">Membrane</keyword>
<keyword id="KW-1185">Reference proteome</keyword>
<keyword id="KW-0812">Transmembrane</keyword>
<keyword id="KW-1133">Transmembrane helix</keyword>
<comment type="subcellular location">
    <subcellularLocation>
        <location evidence="3">Membrane</location>
        <topology evidence="3">Single-pass membrane protein</topology>
    </subcellularLocation>
</comment>
<comment type="similarity">
    <text evidence="3">Belongs to the UPF0239 family.</text>
</comment>
<reference key="1">
    <citation type="journal article" date="2005" name="Science">
        <title>The transcriptional landscape of the mammalian genome.</title>
        <authorList>
            <person name="Carninci P."/>
            <person name="Kasukawa T."/>
            <person name="Katayama S."/>
            <person name="Gough J."/>
            <person name="Frith M.C."/>
            <person name="Maeda N."/>
            <person name="Oyama R."/>
            <person name="Ravasi T."/>
            <person name="Lenhard B."/>
            <person name="Wells C."/>
            <person name="Kodzius R."/>
            <person name="Shimokawa K."/>
            <person name="Bajic V.B."/>
            <person name="Brenner S.E."/>
            <person name="Batalov S."/>
            <person name="Forrest A.R."/>
            <person name="Zavolan M."/>
            <person name="Davis M.J."/>
            <person name="Wilming L.G."/>
            <person name="Aidinis V."/>
            <person name="Allen J.E."/>
            <person name="Ambesi-Impiombato A."/>
            <person name="Apweiler R."/>
            <person name="Aturaliya R.N."/>
            <person name="Bailey T.L."/>
            <person name="Bansal M."/>
            <person name="Baxter L."/>
            <person name="Beisel K.W."/>
            <person name="Bersano T."/>
            <person name="Bono H."/>
            <person name="Chalk A.M."/>
            <person name="Chiu K.P."/>
            <person name="Choudhary V."/>
            <person name="Christoffels A."/>
            <person name="Clutterbuck D.R."/>
            <person name="Crowe M.L."/>
            <person name="Dalla E."/>
            <person name="Dalrymple B.P."/>
            <person name="de Bono B."/>
            <person name="Della Gatta G."/>
            <person name="di Bernardo D."/>
            <person name="Down T."/>
            <person name="Engstrom P."/>
            <person name="Fagiolini M."/>
            <person name="Faulkner G."/>
            <person name="Fletcher C.F."/>
            <person name="Fukushima T."/>
            <person name="Furuno M."/>
            <person name="Futaki S."/>
            <person name="Gariboldi M."/>
            <person name="Georgii-Hemming P."/>
            <person name="Gingeras T.R."/>
            <person name="Gojobori T."/>
            <person name="Green R.E."/>
            <person name="Gustincich S."/>
            <person name="Harbers M."/>
            <person name="Hayashi Y."/>
            <person name="Hensch T.K."/>
            <person name="Hirokawa N."/>
            <person name="Hill D."/>
            <person name="Huminiecki L."/>
            <person name="Iacono M."/>
            <person name="Ikeo K."/>
            <person name="Iwama A."/>
            <person name="Ishikawa T."/>
            <person name="Jakt M."/>
            <person name="Kanapin A."/>
            <person name="Katoh M."/>
            <person name="Kawasawa Y."/>
            <person name="Kelso J."/>
            <person name="Kitamura H."/>
            <person name="Kitano H."/>
            <person name="Kollias G."/>
            <person name="Krishnan S.P."/>
            <person name="Kruger A."/>
            <person name="Kummerfeld S.K."/>
            <person name="Kurochkin I.V."/>
            <person name="Lareau L.F."/>
            <person name="Lazarevic D."/>
            <person name="Lipovich L."/>
            <person name="Liu J."/>
            <person name="Liuni S."/>
            <person name="McWilliam S."/>
            <person name="Madan Babu M."/>
            <person name="Madera M."/>
            <person name="Marchionni L."/>
            <person name="Matsuda H."/>
            <person name="Matsuzawa S."/>
            <person name="Miki H."/>
            <person name="Mignone F."/>
            <person name="Miyake S."/>
            <person name="Morris K."/>
            <person name="Mottagui-Tabar S."/>
            <person name="Mulder N."/>
            <person name="Nakano N."/>
            <person name="Nakauchi H."/>
            <person name="Ng P."/>
            <person name="Nilsson R."/>
            <person name="Nishiguchi S."/>
            <person name="Nishikawa S."/>
            <person name="Nori F."/>
            <person name="Ohara O."/>
            <person name="Okazaki Y."/>
            <person name="Orlando V."/>
            <person name="Pang K.C."/>
            <person name="Pavan W.J."/>
            <person name="Pavesi G."/>
            <person name="Pesole G."/>
            <person name="Petrovsky N."/>
            <person name="Piazza S."/>
            <person name="Reed J."/>
            <person name="Reid J.F."/>
            <person name="Ring B.Z."/>
            <person name="Ringwald M."/>
            <person name="Rost B."/>
            <person name="Ruan Y."/>
            <person name="Salzberg S.L."/>
            <person name="Sandelin A."/>
            <person name="Schneider C."/>
            <person name="Schoenbach C."/>
            <person name="Sekiguchi K."/>
            <person name="Semple C.A."/>
            <person name="Seno S."/>
            <person name="Sessa L."/>
            <person name="Sheng Y."/>
            <person name="Shibata Y."/>
            <person name="Shimada H."/>
            <person name="Shimada K."/>
            <person name="Silva D."/>
            <person name="Sinclair B."/>
            <person name="Sperling S."/>
            <person name="Stupka E."/>
            <person name="Sugiura K."/>
            <person name="Sultana R."/>
            <person name="Takenaka Y."/>
            <person name="Taki K."/>
            <person name="Tammoja K."/>
            <person name="Tan S.L."/>
            <person name="Tang S."/>
            <person name="Taylor M.S."/>
            <person name="Tegner J."/>
            <person name="Teichmann S.A."/>
            <person name="Ueda H.R."/>
            <person name="van Nimwegen E."/>
            <person name="Verardo R."/>
            <person name="Wei C.L."/>
            <person name="Yagi K."/>
            <person name="Yamanishi H."/>
            <person name="Zabarovsky E."/>
            <person name="Zhu S."/>
            <person name="Zimmer A."/>
            <person name="Hide W."/>
            <person name="Bult C."/>
            <person name="Grimmond S.M."/>
            <person name="Teasdale R.D."/>
            <person name="Liu E.T."/>
            <person name="Brusic V."/>
            <person name="Quackenbush J."/>
            <person name="Wahlestedt C."/>
            <person name="Mattick J.S."/>
            <person name="Hume D.A."/>
            <person name="Kai C."/>
            <person name="Sasaki D."/>
            <person name="Tomaru Y."/>
            <person name="Fukuda S."/>
            <person name="Kanamori-Katayama M."/>
            <person name="Suzuki M."/>
            <person name="Aoki J."/>
            <person name="Arakawa T."/>
            <person name="Iida J."/>
            <person name="Imamura K."/>
            <person name="Itoh M."/>
            <person name="Kato T."/>
            <person name="Kawaji H."/>
            <person name="Kawagashira N."/>
            <person name="Kawashima T."/>
            <person name="Kojima M."/>
            <person name="Kondo S."/>
            <person name="Konno H."/>
            <person name="Nakano K."/>
            <person name="Ninomiya N."/>
            <person name="Nishio T."/>
            <person name="Okada M."/>
            <person name="Plessy C."/>
            <person name="Shibata K."/>
            <person name="Shiraki T."/>
            <person name="Suzuki S."/>
            <person name="Tagami M."/>
            <person name="Waki K."/>
            <person name="Watahiki A."/>
            <person name="Okamura-Oho Y."/>
            <person name="Suzuki H."/>
            <person name="Kawai J."/>
            <person name="Hayashizaki Y."/>
        </authorList>
    </citation>
    <scope>NUCLEOTIDE SEQUENCE [LARGE SCALE MRNA]</scope>
    <source>
        <strain>C57BL/6J</strain>
        <strain>NOD</strain>
        <tissue>Pancreas</tissue>
    </source>
</reference>
<reference key="2">
    <citation type="journal article" date="2004" name="Genome Res.">
        <title>The status, quality, and expansion of the NIH full-length cDNA project: the Mammalian Gene Collection (MGC).</title>
        <authorList>
            <consortium name="The MGC Project Team"/>
        </authorList>
    </citation>
    <scope>NUCLEOTIDE SEQUENCE [LARGE SCALE MRNA]</scope>
    <source>
        <tissue>Mammary cancer</tissue>
    </source>
</reference>
<gene>
    <name type="primary">Manbal</name>
</gene>
<protein>
    <recommendedName>
        <fullName>Protein MANBAL</fullName>
    </recommendedName>
</protein>
<organism>
    <name type="scientific">Mus musculus</name>
    <name type="common">Mouse</name>
    <dbReference type="NCBI Taxonomy" id="10090"/>
    <lineage>
        <taxon>Eukaryota</taxon>
        <taxon>Metazoa</taxon>
        <taxon>Chordata</taxon>
        <taxon>Craniata</taxon>
        <taxon>Vertebrata</taxon>
        <taxon>Euteleostomi</taxon>
        <taxon>Mammalia</taxon>
        <taxon>Eutheria</taxon>
        <taxon>Euarchontoglires</taxon>
        <taxon>Glires</taxon>
        <taxon>Rodentia</taxon>
        <taxon>Myomorpha</taxon>
        <taxon>Muroidea</taxon>
        <taxon>Muridae</taxon>
        <taxon>Murinae</taxon>
        <taxon>Mus</taxon>
        <taxon>Mus</taxon>
    </lineage>
</organism>
<dbReference type="EMBL" id="AK007599">
    <property type="protein sequence ID" value="BAB25129.1"/>
    <property type="molecule type" value="mRNA"/>
</dbReference>
<dbReference type="EMBL" id="AK169993">
    <property type="protein sequence ID" value="BAE41502.1"/>
    <property type="molecule type" value="mRNA"/>
</dbReference>
<dbReference type="EMBL" id="BC013803">
    <property type="protein sequence ID" value="AAH13803.1"/>
    <property type="molecule type" value="mRNA"/>
</dbReference>
<dbReference type="EMBL" id="BC030375">
    <property type="protein sequence ID" value="AAH30375.1"/>
    <property type="molecule type" value="mRNA"/>
</dbReference>
<dbReference type="CCDS" id="CCDS38304.1"/>
<dbReference type="SMR" id="Q9D8X0"/>
<dbReference type="FunCoup" id="Q9D8X0">
    <property type="interactions" value="55"/>
</dbReference>
<dbReference type="STRING" id="10090.ENSMUSP00000079965"/>
<dbReference type="PhosphoSitePlus" id="Q9D8X0"/>
<dbReference type="PaxDb" id="10090-ENSMUSP00000079965"/>
<dbReference type="ProteomicsDB" id="287307"/>
<dbReference type="Pumba" id="Q9D8X0"/>
<dbReference type="AGR" id="MGI:1916411"/>
<dbReference type="MGI" id="MGI:1916411">
    <property type="gene designation" value="Manbal"/>
</dbReference>
<dbReference type="eggNOG" id="ENOG502S6QI">
    <property type="taxonomic scope" value="Eukaryota"/>
</dbReference>
<dbReference type="InParanoid" id="Q9D8X0"/>
<dbReference type="PhylomeDB" id="Q9D8X0"/>
<dbReference type="PRO" id="PR:Q9D8X0"/>
<dbReference type="Proteomes" id="UP000000589">
    <property type="component" value="Unplaced"/>
</dbReference>
<dbReference type="RNAct" id="Q9D8X0">
    <property type="molecule type" value="protein"/>
</dbReference>
<dbReference type="GO" id="GO:0016020">
    <property type="term" value="C:membrane"/>
    <property type="evidence" value="ECO:0007669"/>
    <property type="project" value="UniProtKB-SubCell"/>
</dbReference>
<dbReference type="InterPro" id="IPR009621">
    <property type="entry name" value="UPF0239"/>
</dbReference>
<dbReference type="PANTHER" id="PTHR14409">
    <property type="entry name" value="MANNOSIDASE, BETA A, LYSOSOMAL-LIKE, MANBAL PROTEIN"/>
    <property type="match status" value="1"/>
</dbReference>
<dbReference type="PANTHER" id="PTHR14409:SF0">
    <property type="entry name" value="PROTEIN MANBAL"/>
    <property type="match status" value="1"/>
</dbReference>
<dbReference type="Pfam" id="PF06783">
    <property type="entry name" value="UPF0239"/>
    <property type="match status" value="1"/>
</dbReference>
<accession>Q9D8X0</accession>
<accession>Q3TDU6</accession>
<accession>Q91YV8</accession>
<name>MANBL_MOUSE</name>
<sequence length="85" mass="9340">MASDLGFSPPEVPEPTFLENLLRYGLFLGAIFQLICVLAIIVPIPKSHEAEAEQAEPRSAEGPKKPKAAIASTNKRPKKETKKKR</sequence>
<feature type="chain" id="PRO_0000194180" description="Protein MANBAL">
    <location>
        <begin position="1"/>
        <end position="85"/>
    </location>
</feature>
<feature type="transmembrane region" description="Helical" evidence="1">
    <location>
        <begin position="24"/>
        <end position="44"/>
    </location>
</feature>
<feature type="region of interest" description="Disordered" evidence="2">
    <location>
        <begin position="49"/>
        <end position="85"/>
    </location>
</feature>
<feature type="compositionally biased region" description="Basic and acidic residues" evidence="2">
    <location>
        <begin position="49"/>
        <end position="64"/>
    </location>
</feature>
<feature type="compositionally biased region" description="Basic residues" evidence="2">
    <location>
        <begin position="75"/>
        <end position="85"/>
    </location>
</feature>
<feature type="sequence conflict" description="In Ref. 1; BAB25129." evidence="3" ref="1">
    <original>A</original>
    <variation>D</variation>
    <location>
        <position position="2"/>
    </location>
</feature>
<feature type="sequence conflict" description="In Ref. 1; BAB25129." evidence="3" ref="1">
    <original>A</original>
    <variation>V</variation>
    <location>
        <position position="68"/>
    </location>
</feature>